<organism>
    <name type="scientific">Staphylococcus aureus (strain MRSA252)</name>
    <dbReference type="NCBI Taxonomy" id="282458"/>
    <lineage>
        <taxon>Bacteria</taxon>
        <taxon>Bacillati</taxon>
        <taxon>Bacillota</taxon>
        <taxon>Bacilli</taxon>
        <taxon>Bacillales</taxon>
        <taxon>Staphylococcaceae</taxon>
        <taxon>Staphylococcus</taxon>
    </lineage>
</organism>
<comment type="function">
    <text evidence="1">Reversibly transfers an adenylyl group from ATP to 4'-phosphopantetheine, yielding dephospho-CoA (dPCoA) and pyrophosphate.</text>
</comment>
<comment type="catalytic activity">
    <reaction evidence="1">
        <text>(R)-4'-phosphopantetheine + ATP + H(+) = 3'-dephospho-CoA + diphosphate</text>
        <dbReference type="Rhea" id="RHEA:19801"/>
        <dbReference type="ChEBI" id="CHEBI:15378"/>
        <dbReference type="ChEBI" id="CHEBI:30616"/>
        <dbReference type="ChEBI" id="CHEBI:33019"/>
        <dbReference type="ChEBI" id="CHEBI:57328"/>
        <dbReference type="ChEBI" id="CHEBI:61723"/>
        <dbReference type="EC" id="2.7.7.3"/>
    </reaction>
</comment>
<comment type="cofactor">
    <cofactor evidence="1">
        <name>Mg(2+)</name>
        <dbReference type="ChEBI" id="CHEBI:18420"/>
    </cofactor>
</comment>
<comment type="pathway">
    <text evidence="1">Cofactor biosynthesis; coenzyme A biosynthesis; CoA from (R)-pantothenate: step 4/5.</text>
</comment>
<comment type="subunit">
    <text evidence="1">Homohexamer.</text>
</comment>
<comment type="subcellular location">
    <subcellularLocation>
        <location evidence="1">Cytoplasm</location>
    </subcellularLocation>
</comment>
<comment type="similarity">
    <text evidence="1">Belongs to the bacterial CoaD family.</text>
</comment>
<name>COAD_STAAR</name>
<gene>
    <name evidence="1" type="primary">coaD</name>
    <name type="ordered locus">SAR1098</name>
</gene>
<reference key="1">
    <citation type="journal article" date="2004" name="Proc. Natl. Acad. Sci. U.S.A.">
        <title>Complete genomes of two clinical Staphylococcus aureus strains: evidence for the rapid evolution of virulence and drug resistance.</title>
        <authorList>
            <person name="Holden M.T.G."/>
            <person name="Feil E.J."/>
            <person name="Lindsay J.A."/>
            <person name="Peacock S.J."/>
            <person name="Day N.P.J."/>
            <person name="Enright M.C."/>
            <person name="Foster T.J."/>
            <person name="Moore C.E."/>
            <person name="Hurst L."/>
            <person name="Atkin R."/>
            <person name="Barron A."/>
            <person name="Bason N."/>
            <person name="Bentley S.D."/>
            <person name="Chillingworth C."/>
            <person name="Chillingworth T."/>
            <person name="Churcher C."/>
            <person name="Clark L."/>
            <person name="Corton C."/>
            <person name="Cronin A."/>
            <person name="Doggett J."/>
            <person name="Dowd L."/>
            <person name="Feltwell T."/>
            <person name="Hance Z."/>
            <person name="Harris B."/>
            <person name="Hauser H."/>
            <person name="Holroyd S."/>
            <person name="Jagels K."/>
            <person name="James K.D."/>
            <person name="Lennard N."/>
            <person name="Line A."/>
            <person name="Mayes R."/>
            <person name="Moule S."/>
            <person name="Mungall K."/>
            <person name="Ormond D."/>
            <person name="Quail M.A."/>
            <person name="Rabbinowitsch E."/>
            <person name="Rutherford K.M."/>
            <person name="Sanders M."/>
            <person name="Sharp S."/>
            <person name="Simmonds M."/>
            <person name="Stevens K."/>
            <person name="Whitehead S."/>
            <person name="Barrell B.G."/>
            <person name="Spratt B.G."/>
            <person name="Parkhill J."/>
        </authorList>
    </citation>
    <scope>NUCLEOTIDE SEQUENCE [LARGE SCALE GENOMIC DNA]</scope>
    <source>
        <strain>MRSA252</strain>
    </source>
</reference>
<accession>Q6GHW1</accession>
<proteinExistence type="inferred from homology"/>
<protein>
    <recommendedName>
        <fullName evidence="1">Phosphopantetheine adenylyltransferase</fullName>
        <ecNumber evidence="1">2.7.7.3</ecNumber>
    </recommendedName>
    <alternativeName>
        <fullName evidence="1">Dephospho-CoA pyrophosphorylase</fullName>
    </alternativeName>
    <alternativeName>
        <fullName evidence="1">Pantetheine-phosphate adenylyltransferase</fullName>
        <shortName evidence="1">PPAT</shortName>
    </alternativeName>
</protein>
<dbReference type="EC" id="2.7.7.3" evidence="1"/>
<dbReference type="EMBL" id="BX571856">
    <property type="protein sequence ID" value="CAG40100.1"/>
    <property type="molecule type" value="Genomic_DNA"/>
</dbReference>
<dbReference type="RefSeq" id="WP_000401377.1">
    <property type="nucleotide sequence ID" value="NC_002952.2"/>
</dbReference>
<dbReference type="SMR" id="Q6GHW1"/>
<dbReference type="GeneID" id="98345441"/>
<dbReference type="KEGG" id="sar:SAR1098"/>
<dbReference type="HOGENOM" id="CLU_100149_0_1_9"/>
<dbReference type="UniPathway" id="UPA00241">
    <property type="reaction ID" value="UER00355"/>
</dbReference>
<dbReference type="Proteomes" id="UP000000596">
    <property type="component" value="Chromosome"/>
</dbReference>
<dbReference type="GO" id="GO:0005737">
    <property type="term" value="C:cytoplasm"/>
    <property type="evidence" value="ECO:0007669"/>
    <property type="project" value="UniProtKB-SubCell"/>
</dbReference>
<dbReference type="GO" id="GO:0005524">
    <property type="term" value="F:ATP binding"/>
    <property type="evidence" value="ECO:0007669"/>
    <property type="project" value="UniProtKB-KW"/>
</dbReference>
<dbReference type="GO" id="GO:0004595">
    <property type="term" value="F:pantetheine-phosphate adenylyltransferase activity"/>
    <property type="evidence" value="ECO:0007669"/>
    <property type="project" value="UniProtKB-UniRule"/>
</dbReference>
<dbReference type="GO" id="GO:0015937">
    <property type="term" value="P:coenzyme A biosynthetic process"/>
    <property type="evidence" value="ECO:0007669"/>
    <property type="project" value="UniProtKB-UniRule"/>
</dbReference>
<dbReference type="CDD" id="cd02163">
    <property type="entry name" value="PPAT"/>
    <property type="match status" value="1"/>
</dbReference>
<dbReference type="Gene3D" id="3.40.50.620">
    <property type="entry name" value="HUPs"/>
    <property type="match status" value="1"/>
</dbReference>
<dbReference type="HAMAP" id="MF_00151">
    <property type="entry name" value="PPAT_bact"/>
    <property type="match status" value="1"/>
</dbReference>
<dbReference type="InterPro" id="IPR004821">
    <property type="entry name" value="Cyt_trans-like"/>
</dbReference>
<dbReference type="InterPro" id="IPR001980">
    <property type="entry name" value="PPAT"/>
</dbReference>
<dbReference type="InterPro" id="IPR014729">
    <property type="entry name" value="Rossmann-like_a/b/a_fold"/>
</dbReference>
<dbReference type="NCBIfam" id="TIGR01510">
    <property type="entry name" value="coaD_prev_kdtB"/>
    <property type="match status" value="1"/>
</dbReference>
<dbReference type="NCBIfam" id="TIGR00125">
    <property type="entry name" value="cyt_tran_rel"/>
    <property type="match status" value="1"/>
</dbReference>
<dbReference type="PANTHER" id="PTHR21342">
    <property type="entry name" value="PHOSPHOPANTETHEINE ADENYLYLTRANSFERASE"/>
    <property type="match status" value="1"/>
</dbReference>
<dbReference type="PANTHER" id="PTHR21342:SF1">
    <property type="entry name" value="PHOSPHOPANTETHEINE ADENYLYLTRANSFERASE"/>
    <property type="match status" value="1"/>
</dbReference>
<dbReference type="Pfam" id="PF01467">
    <property type="entry name" value="CTP_transf_like"/>
    <property type="match status" value="1"/>
</dbReference>
<dbReference type="PRINTS" id="PR01020">
    <property type="entry name" value="LPSBIOSNTHSS"/>
</dbReference>
<dbReference type="SUPFAM" id="SSF52374">
    <property type="entry name" value="Nucleotidylyl transferase"/>
    <property type="match status" value="1"/>
</dbReference>
<evidence type="ECO:0000255" key="1">
    <source>
        <dbReference type="HAMAP-Rule" id="MF_00151"/>
    </source>
</evidence>
<sequence>MEHTIAVIPGSFDPITYGHLDIIERSTDRFDEIHVCVLKNSKKEGTFSLEERMDLIEQSVKHLPNVKVHQFSGLLVDYCEQVGAKTIIRGLRAVSDFEYELRLTSMNKKLNNEIETLYMMSSTNYSFISSSIVKEVAAYRADISEFVPPYVEKALKKKFK</sequence>
<keyword id="KW-0067">ATP-binding</keyword>
<keyword id="KW-0173">Coenzyme A biosynthesis</keyword>
<keyword id="KW-0963">Cytoplasm</keyword>
<keyword id="KW-0460">Magnesium</keyword>
<keyword id="KW-0547">Nucleotide-binding</keyword>
<keyword id="KW-0548">Nucleotidyltransferase</keyword>
<keyword id="KW-0808">Transferase</keyword>
<feature type="chain" id="PRO_0000156274" description="Phosphopantetheine adenylyltransferase">
    <location>
        <begin position="1"/>
        <end position="160"/>
    </location>
</feature>
<feature type="binding site" evidence="1">
    <location>
        <begin position="11"/>
        <end position="12"/>
    </location>
    <ligand>
        <name>ATP</name>
        <dbReference type="ChEBI" id="CHEBI:30616"/>
    </ligand>
</feature>
<feature type="binding site" evidence="1">
    <location>
        <position position="11"/>
    </location>
    <ligand>
        <name>substrate</name>
    </ligand>
</feature>
<feature type="binding site" evidence="1">
    <location>
        <position position="19"/>
    </location>
    <ligand>
        <name>ATP</name>
        <dbReference type="ChEBI" id="CHEBI:30616"/>
    </ligand>
</feature>
<feature type="binding site" evidence="1">
    <location>
        <position position="43"/>
    </location>
    <ligand>
        <name>substrate</name>
    </ligand>
</feature>
<feature type="binding site" evidence="1">
    <location>
        <position position="75"/>
    </location>
    <ligand>
        <name>substrate</name>
    </ligand>
</feature>
<feature type="binding site" evidence="1">
    <location>
        <position position="89"/>
    </location>
    <ligand>
        <name>substrate</name>
    </ligand>
</feature>
<feature type="binding site" evidence="1">
    <location>
        <begin position="90"/>
        <end position="92"/>
    </location>
    <ligand>
        <name>ATP</name>
        <dbReference type="ChEBI" id="CHEBI:30616"/>
    </ligand>
</feature>
<feature type="binding site" evidence="1">
    <location>
        <position position="100"/>
    </location>
    <ligand>
        <name>ATP</name>
        <dbReference type="ChEBI" id="CHEBI:30616"/>
    </ligand>
</feature>
<feature type="binding site" evidence="1">
    <location>
        <begin position="125"/>
        <end position="131"/>
    </location>
    <ligand>
        <name>ATP</name>
        <dbReference type="ChEBI" id="CHEBI:30616"/>
    </ligand>
</feature>
<feature type="site" description="Transition state stabilizer" evidence="1">
    <location>
        <position position="19"/>
    </location>
</feature>